<proteinExistence type="evidence at protein level"/>
<organism>
    <name type="scientific">Caenorhabditis elegans</name>
    <dbReference type="NCBI Taxonomy" id="6239"/>
    <lineage>
        <taxon>Eukaryota</taxon>
        <taxon>Metazoa</taxon>
        <taxon>Ecdysozoa</taxon>
        <taxon>Nematoda</taxon>
        <taxon>Chromadorea</taxon>
        <taxon>Rhabditida</taxon>
        <taxon>Rhabditina</taxon>
        <taxon>Rhabditomorpha</taxon>
        <taxon>Rhabditoidea</taxon>
        <taxon>Rhabditidae</taxon>
        <taxon>Peloderinae</taxon>
        <taxon>Caenorhabditis</taxon>
    </lineage>
</organism>
<gene>
    <name evidence="5" type="primary">arx-6</name>
    <name evidence="5" type="ORF">C35D10.16</name>
</gene>
<evidence type="ECO:0000250" key="1"/>
<evidence type="ECO:0000269" key="2">
    <source>
    </source>
</evidence>
<evidence type="ECO:0000305" key="3"/>
<evidence type="ECO:0000305" key="4">
    <source>
    </source>
</evidence>
<evidence type="ECO:0000312" key="5">
    <source>
        <dbReference type="WormBase" id="C35D10.16"/>
    </source>
</evidence>
<feature type="chain" id="PRO_0000124051" description="Probable actin-related protein 2/3 complex subunit 4">
    <location>
        <begin position="1"/>
        <end position="169"/>
    </location>
</feature>
<reference key="1">
    <citation type="journal article" date="1998" name="Science">
        <title>Genome sequence of the nematode C. elegans: a platform for investigating biology.</title>
        <authorList>
            <consortium name="The C. elegans sequencing consortium"/>
        </authorList>
    </citation>
    <scope>NUCLEOTIDE SEQUENCE [LARGE SCALE GENOMIC DNA]</scope>
    <source>
        <strain>Bristol N2</strain>
    </source>
</reference>
<reference key="2">
    <citation type="journal article" date="2014" name="Cell">
        <title>Forgetting is regulated via Musashi-mediated translational control of the Arp2/3 complex.</title>
        <authorList>
            <person name="Hadziselimovic N."/>
            <person name="Vukojevic V."/>
            <person name="Peter F."/>
            <person name="Milnik A."/>
            <person name="Fastenrath M."/>
            <person name="Fenyves B.G."/>
            <person name="Hieber P."/>
            <person name="Demougin P."/>
            <person name="Vogler C."/>
            <person name="de Quervain D.J."/>
            <person name="Papassotiropoulos A."/>
            <person name="Stetak A."/>
        </authorList>
    </citation>
    <scope>FUNCTION</scope>
    <scope>IDENTIFICATION IN ARP2/3 COMPLEX</scope>
    <scope>DISRUPTION PHENOTYPE</scope>
</reference>
<comment type="function">
    <text evidence="1 2">Functions as actin-binding component of the Arp2/3 complex which is involved in regulation of actin polymerization and together with an activating nucleation-promoting factor (NPF) mediates the formation of branched actin networks. Seems to contact the mother actin filament (By similarity). Plays a role in time-dependent memory loss and the retention of conditioned behavior over time (PubMed:24630719).</text>
</comment>
<comment type="subunit">
    <text evidence="4">Component of the Arp2/3 complex, at least composed of arx-1, arx-2, arx-4 and arx-6.</text>
</comment>
<comment type="subcellular location">
    <subcellularLocation>
        <location evidence="1">Cytoplasm</location>
        <location evidence="1">Cytoskeleton</location>
    </subcellularLocation>
</comment>
<comment type="disruption phenotype">
    <text evidence="2">RNAi-mediated knockdown suppresses the memory retention defects of the msi-1 os1 loss of function mutant.</text>
</comment>
<comment type="similarity">
    <text evidence="3">Belongs to the ARPC4 family.</text>
</comment>
<keyword id="KW-0009">Actin-binding</keyword>
<keyword id="KW-0963">Cytoplasm</keyword>
<keyword id="KW-0206">Cytoskeleton</keyword>
<keyword id="KW-1185">Reference proteome</keyword>
<sequence>MSATLQPYLEAVRHTLQAALCLEQFSSQVVERHNKPEVEVQTSKELLMTPVVVARNKQERVLIEPSVNSVRISIAIKQSDEIEKILCHKFTRFMCQRADNFFVLRRKPLPGYDISFLITASHTEAMFKHKLVDFLLHFMQEIDKEISEMKLSLNARARVSAEEFLKRFN</sequence>
<accession>P58798</accession>
<accession>Q18491</accession>
<accession>Q95QS0</accession>
<protein>
    <recommendedName>
        <fullName>Probable actin-related protein 2/3 complex subunit 4</fullName>
    </recommendedName>
    <alternativeName>
        <fullName>Arp2/3 complex 20 kDa subunit</fullName>
        <shortName>p20-ARC</shortName>
    </alternativeName>
</protein>
<dbReference type="EMBL" id="BX284603">
    <property type="protein sequence ID" value="CCD66789.1"/>
    <property type="molecule type" value="Genomic_DNA"/>
</dbReference>
<dbReference type="RefSeq" id="NP_498020.1">
    <property type="nucleotide sequence ID" value="NM_065619.7"/>
</dbReference>
<dbReference type="SMR" id="P58798"/>
<dbReference type="BioGRID" id="40884">
    <property type="interactions" value="12"/>
</dbReference>
<dbReference type="FunCoup" id="P58798">
    <property type="interactions" value="2619"/>
</dbReference>
<dbReference type="STRING" id="6239.C35D10.16.1"/>
<dbReference type="PaxDb" id="6239-C35D10.16"/>
<dbReference type="PeptideAtlas" id="P58798"/>
<dbReference type="EnsemblMetazoa" id="C35D10.16.1">
    <property type="protein sequence ID" value="C35D10.16.1"/>
    <property type="gene ID" value="WBGene00000204"/>
</dbReference>
<dbReference type="GeneID" id="175650"/>
<dbReference type="KEGG" id="cel:CELE_C35D10.16"/>
<dbReference type="UCSC" id="C35D10.16">
    <property type="organism name" value="c. elegans"/>
</dbReference>
<dbReference type="AGR" id="WB:WBGene00000204"/>
<dbReference type="CTD" id="175650"/>
<dbReference type="WormBase" id="C35D10.16">
    <property type="protein sequence ID" value="CE28899"/>
    <property type="gene ID" value="WBGene00000204"/>
    <property type="gene designation" value="arx-6"/>
</dbReference>
<dbReference type="eggNOG" id="KOG1876">
    <property type="taxonomic scope" value="Eukaryota"/>
</dbReference>
<dbReference type="GeneTree" id="ENSGT00390000016233"/>
<dbReference type="HOGENOM" id="CLU_084855_1_0_1"/>
<dbReference type="InParanoid" id="P58798"/>
<dbReference type="OMA" id="EAYLGEF"/>
<dbReference type="OrthoDB" id="336240at2759"/>
<dbReference type="PhylomeDB" id="P58798"/>
<dbReference type="Reactome" id="R-CEL-2029482">
    <property type="pathway name" value="Regulation of actin dynamics for phagocytic cup formation"/>
</dbReference>
<dbReference type="Reactome" id="R-CEL-3928662">
    <property type="pathway name" value="EPHB-mediated forward signaling"/>
</dbReference>
<dbReference type="Reactome" id="R-CEL-5663213">
    <property type="pathway name" value="RHO GTPases Activate WASPs and WAVEs"/>
</dbReference>
<dbReference type="Reactome" id="R-CEL-8856828">
    <property type="pathway name" value="Clathrin-mediated endocytosis"/>
</dbReference>
<dbReference type="PRO" id="PR:P58798"/>
<dbReference type="Proteomes" id="UP000001940">
    <property type="component" value="Chromosome III"/>
</dbReference>
<dbReference type="Bgee" id="WBGene00000204">
    <property type="expression patterns" value="Expressed in pharyngeal muscle cell (C elegans) and 3 other cell types or tissues"/>
</dbReference>
<dbReference type="GO" id="GO:0005885">
    <property type="term" value="C:Arp2/3 protein complex"/>
    <property type="evidence" value="ECO:0000318"/>
    <property type="project" value="GO_Central"/>
</dbReference>
<dbReference type="GO" id="GO:0005737">
    <property type="term" value="C:cytoplasm"/>
    <property type="evidence" value="ECO:0007669"/>
    <property type="project" value="UniProtKB-KW"/>
</dbReference>
<dbReference type="GO" id="GO:0051015">
    <property type="term" value="F:actin filament binding"/>
    <property type="evidence" value="ECO:0000318"/>
    <property type="project" value="GO_Central"/>
</dbReference>
<dbReference type="GO" id="GO:0030041">
    <property type="term" value="P:actin filament polymerization"/>
    <property type="evidence" value="ECO:0007669"/>
    <property type="project" value="InterPro"/>
</dbReference>
<dbReference type="GO" id="GO:0034314">
    <property type="term" value="P:Arp2/3 complex-mediated actin nucleation"/>
    <property type="evidence" value="ECO:0000318"/>
    <property type="project" value="GO_Central"/>
</dbReference>
<dbReference type="GO" id="GO:0010631">
    <property type="term" value="P:epithelial cell migration"/>
    <property type="evidence" value="ECO:0000315"/>
    <property type="project" value="WormBase"/>
</dbReference>
<dbReference type="GO" id="GO:0016331">
    <property type="term" value="P:morphogenesis of embryonic epithelium"/>
    <property type="evidence" value="ECO:0000315"/>
    <property type="project" value="WormBase"/>
</dbReference>
<dbReference type="FunFam" id="3.30.1460.20:FF:000001">
    <property type="entry name" value="Actin-related protein 2/3 complex subunit 4"/>
    <property type="match status" value="1"/>
</dbReference>
<dbReference type="Gene3D" id="3.30.1460.20">
    <property type="match status" value="1"/>
</dbReference>
<dbReference type="InterPro" id="IPR034666">
    <property type="entry name" value="ARPC2/4"/>
</dbReference>
<dbReference type="InterPro" id="IPR008384">
    <property type="entry name" value="ARPC4"/>
</dbReference>
<dbReference type="PANTHER" id="PTHR22629:SF0">
    <property type="entry name" value="ACTIN-RELATED PROTEIN 2_3 COMPLEX SUBUNIT 4"/>
    <property type="match status" value="1"/>
</dbReference>
<dbReference type="PANTHER" id="PTHR22629">
    <property type="entry name" value="ARP2/3 COMPLEX 20 KD SUBUNIT"/>
    <property type="match status" value="1"/>
</dbReference>
<dbReference type="Pfam" id="PF05856">
    <property type="entry name" value="ARPC4"/>
    <property type="match status" value="1"/>
</dbReference>
<dbReference type="PIRSF" id="PIRSF039100">
    <property type="entry name" value="ARPC4"/>
    <property type="match status" value="1"/>
</dbReference>
<dbReference type="SUPFAM" id="SSF69645">
    <property type="entry name" value="Arp2/3 complex subunits"/>
    <property type="match status" value="1"/>
</dbReference>
<name>ARPC4_CAEEL</name>